<reference key="1">
    <citation type="submission" date="2007-10" db="EMBL/GenBank/DDBJ databases">
        <title>Complete sequence of Shewanella pealeana ATCC 700345.</title>
        <authorList>
            <consortium name="US DOE Joint Genome Institute"/>
            <person name="Copeland A."/>
            <person name="Lucas S."/>
            <person name="Lapidus A."/>
            <person name="Barry K."/>
            <person name="Glavina del Rio T."/>
            <person name="Dalin E."/>
            <person name="Tice H."/>
            <person name="Pitluck S."/>
            <person name="Chertkov O."/>
            <person name="Brettin T."/>
            <person name="Bruce D."/>
            <person name="Detter J.C."/>
            <person name="Han C."/>
            <person name="Schmutz J."/>
            <person name="Larimer F."/>
            <person name="Land M."/>
            <person name="Hauser L."/>
            <person name="Kyrpides N."/>
            <person name="Kim E."/>
            <person name="Zhao J.-S.Z."/>
            <person name="Manno D."/>
            <person name="Hawari J."/>
            <person name="Richardson P."/>
        </authorList>
    </citation>
    <scope>NUCLEOTIDE SEQUENCE [LARGE SCALE GENOMIC DNA]</scope>
    <source>
        <strain>ATCC 700345 / ANG-SQ1</strain>
    </source>
</reference>
<comment type="function">
    <text evidence="1">Exhibits a very high intrinsic GTPase hydrolysis rate. Involved in the addition of a carboxymethylaminomethyl (cmnm) group at the wobble position (U34) of certain tRNAs, forming tRNA-cmnm(5)s(2)U34.</text>
</comment>
<comment type="cofactor">
    <cofactor evidence="1">
        <name>K(+)</name>
        <dbReference type="ChEBI" id="CHEBI:29103"/>
    </cofactor>
    <text evidence="1">Binds 1 potassium ion per subunit.</text>
</comment>
<comment type="subunit">
    <text evidence="1">Homodimer. Heterotetramer of two MnmE and two MnmG subunits.</text>
</comment>
<comment type="subcellular location">
    <subcellularLocation>
        <location evidence="1">Cytoplasm</location>
    </subcellularLocation>
</comment>
<comment type="similarity">
    <text evidence="1">Belongs to the TRAFAC class TrmE-Era-EngA-EngB-Septin-like GTPase superfamily. TrmE GTPase family.</text>
</comment>
<gene>
    <name evidence="1" type="primary">mnmE</name>
    <name evidence="1" type="synonym">trmE</name>
    <name type="ordered locus">Spea_4256</name>
</gene>
<feature type="chain" id="PRO_1000080015" description="tRNA modification GTPase MnmE">
    <location>
        <begin position="1"/>
        <end position="453"/>
    </location>
</feature>
<feature type="domain" description="TrmE-type G">
    <location>
        <begin position="215"/>
        <end position="376"/>
    </location>
</feature>
<feature type="binding site" evidence="1">
    <location>
        <position position="22"/>
    </location>
    <ligand>
        <name>(6S)-5-formyl-5,6,7,8-tetrahydrofolate</name>
        <dbReference type="ChEBI" id="CHEBI:57457"/>
    </ligand>
</feature>
<feature type="binding site" evidence="1">
    <location>
        <position position="79"/>
    </location>
    <ligand>
        <name>(6S)-5-formyl-5,6,7,8-tetrahydrofolate</name>
        <dbReference type="ChEBI" id="CHEBI:57457"/>
    </ligand>
</feature>
<feature type="binding site" evidence="1">
    <location>
        <position position="119"/>
    </location>
    <ligand>
        <name>(6S)-5-formyl-5,6,7,8-tetrahydrofolate</name>
        <dbReference type="ChEBI" id="CHEBI:57457"/>
    </ligand>
</feature>
<feature type="binding site" evidence="1">
    <location>
        <begin position="225"/>
        <end position="230"/>
    </location>
    <ligand>
        <name>GTP</name>
        <dbReference type="ChEBI" id="CHEBI:37565"/>
    </ligand>
</feature>
<feature type="binding site" evidence="1">
    <location>
        <position position="225"/>
    </location>
    <ligand>
        <name>K(+)</name>
        <dbReference type="ChEBI" id="CHEBI:29103"/>
    </ligand>
</feature>
<feature type="binding site" evidence="1">
    <location>
        <position position="229"/>
    </location>
    <ligand>
        <name>Mg(2+)</name>
        <dbReference type="ChEBI" id="CHEBI:18420"/>
    </ligand>
</feature>
<feature type="binding site" evidence="1">
    <location>
        <begin position="244"/>
        <end position="250"/>
    </location>
    <ligand>
        <name>GTP</name>
        <dbReference type="ChEBI" id="CHEBI:37565"/>
    </ligand>
</feature>
<feature type="binding site" evidence="1">
    <location>
        <position position="244"/>
    </location>
    <ligand>
        <name>K(+)</name>
        <dbReference type="ChEBI" id="CHEBI:29103"/>
    </ligand>
</feature>
<feature type="binding site" evidence="1">
    <location>
        <position position="246"/>
    </location>
    <ligand>
        <name>K(+)</name>
        <dbReference type="ChEBI" id="CHEBI:29103"/>
    </ligand>
</feature>
<feature type="binding site" evidence="1">
    <location>
        <position position="249"/>
    </location>
    <ligand>
        <name>K(+)</name>
        <dbReference type="ChEBI" id="CHEBI:29103"/>
    </ligand>
</feature>
<feature type="binding site" evidence="1">
    <location>
        <position position="250"/>
    </location>
    <ligand>
        <name>Mg(2+)</name>
        <dbReference type="ChEBI" id="CHEBI:18420"/>
    </ligand>
</feature>
<feature type="binding site" evidence="1">
    <location>
        <begin position="269"/>
        <end position="272"/>
    </location>
    <ligand>
        <name>GTP</name>
        <dbReference type="ChEBI" id="CHEBI:37565"/>
    </ligand>
</feature>
<feature type="binding site" evidence="1">
    <location>
        <begin position="334"/>
        <end position="337"/>
    </location>
    <ligand>
        <name>GTP</name>
        <dbReference type="ChEBI" id="CHEBI:37565"/>
    </ligand>
</feature>
<feature type="binding site" evidence="1">
    <location>
        <position position="453"/>
    </location>
    <ligand>
        <name>(6S)-5-formyl-5,6,7,8-tetrahydrofolate</name>
        <dbReference type="ChEBI" id="CHEBI:57457"/>
    </ligand>
</feature>
<organism>
    <name type="scientific">Shewanella pealeana (strain ATCC 700345 / ANG-SQ1)</name>
    <dbReference type="NCBI Taxonomy" id="398579"/>
    <lineage>
        <taxon>Bacteria</taxon>
        <taxon>Pseudomonadati</taxon>
        <taxon>Pseudomonadota</taxon>
        <taxon>Gammaproteobacteria</taxon>
        <taxon>Alteromonadales</taxon>
        <taxon>Shewanellaceae</taxon>
        <taxon>Shewanella</taxon>
    </lineage>
</organism>
<evidence type="ECO:0000255" key="1">
    <source>
        <dbReference type="HAMAP-Rule" id="MF_00379"/>
    </source>
</evidence>
<protein>
    <recommendedName>
        <fullName evidence="1">tRNA modification GTPase MnmE</fullName>
        <ecNumber evidence="1">3.6.-.-</ecNumber>
    </recommendedName>
</protein>
<proteinExistence type="inferred from homology"/>
<dbReference type="EC" id="3.6.-.-" evidence="1"/>
<dbReference type="EMBL" id="CP000851">
    <property type="protein sequence ID" value="ABV89566.1"/>
    <property type="molecule type" value="Genomic_DNA"/>
</dbReference>
<dbReference type="RefSeq" id="WP_012157443.1">
    <property type="nucleotide sequence ID" value="NC_009901.1"/>
</dbReference>
<dbReference type="SMR" id="A8HAH9"/>
<dbReference type="STRING" id="398579.Spea_4256"/>
<dbReference type="KEGG" id="spl:Spea_4256"/>
<dbReference type="eggNOG" id="COG0486">
    <property type="taxonomic scope" value="Bacteria"/>
</dbReference>
<dbReference type="HOGENOM" id="CLU_019624_4_1_6"/>
<dbReference type="OrthoDB" id="9805918at2"/>
<dbReference type="Proteomes" id="UP000002608">
    <property type="component" value="Chromosome"/>
</dbReference>
<dbReference type="GO" id="GO:0005829">
    <property type="term" value="C:cytosol"/>
    <property type="evidence" value="ECO:0007669"/>
    <property type="project" value="TreeGrafter"/>
</dbReference>
<dbReference type="GO" id="GO:0005525">
    <property type="term" value="F:GTP binding"/>
    <property type="evidence" value="ECO:0007669"/>
    <property type="project" value="UniProtKB-UniRule"/>
</dbReference>
<dbReference type="GO" id="GO:0003924">
    <property type="term" value="F:GTPase activity"/>
    <property type="evidence" value="ECO:0007669"/>
    <property type="project" value="UniProtKB-UniRule"/>
</dbReference>
<dbReference type="GO" id="GO:0046872">
    <property type="term" value="F:metal ion binding"/>
    <property type="evidence" value="ECO:0007669"/>
    <property type="project" value="UniProtKB-KW"/>
</dbReference>
<dbReference type="GO" id="GO:0030488">
    <property type="term" value="P:tRNA methylation"/>
    <property type="evidence" value="ECO:0007669"/>
    <property type="project" value="TreeGrafter"/>
</dbReference>
<dbReference type="GO" id="GO:0002098">
    <property type="term" value="P:tRNA wobble uridine modification"/>
    <property type="evidence" value="ECO:0007669"/>
    <property type="project" value="TreeGrafter"/>
</dbReference>
<dbReference type="CDD" id="cd04164">
    <property type="entry name" value="trmE"/>
    <property type="match status" value="1"/>
</dbReference>
<dbReference type="CDD" id="cd14858">
    <property type="entry name" value="TrmE_N"/>
    <property type="match status" value="1"/>
</dbReference>
<dbReference type="FunFam" id="3.30.1360.120:FF:000001">
    <property type="entry name" value="tRNA modification GTPase MnmE"/>
    <property type="match status" value="1"/>
</dbReference>
<dbReference type="FunFam" id="3.40.50.300:FF:000249">
    <property type="entry name" value="tRNA modification GTPase MnmE"/>
    <property type="match status" value="1"/>
</dbReference>
<dbReference type="Gene3D" id="3.40.50.300">
    <property type="entry name" value="P-loop containing nucleotide triphosphate hydrolases"/>
    <property type="match status" value="1"/>
</dbReference>
<dbReference type="Gene3D" id="3.30.1360.120">
    <property type="entry name" value="Probable tRNA modification gtpase trme, domain 1"/>
    <property type="match status" value="1"/>
</dbReference>
<dbReference type="Gene3D" id="1.20.120.430">
    <property type="entry name" value="tRNA modification GTPase MnmE domain 2"/>
    <property type="match status" value="1"/>
</dbReference>
<dbReference type="HAMAP" id="MF_00379">
    <property type="entry name" value="GTPase_MnmE"/>
    <property type="match status" value="1"/>
</dbReference>
<dbReference type="InterPro" id="IPR031168">
    <property type="entry name" value="G_TrmE"/>
</dbReference>
<dbReference type="InterPro" id="IPR006073">
    <property type="entry name" value="GTP-bd"/>
</dbReference>
<dbReference type="InterPro" id="IPR018948">
    <property type="entry name" value="GTP-bd_TrmE_N"/>
</dbReference>
<dbReference type="InterPro" id="IPR004520">
    <property type="entry name" value="GTPase_MnmE"/>
</dbReference>
<dbReference type="InterPro" id="IPR027368">
    <property type="entry name" value="MnmE_dom2"/>
</dbReference>
<dbReference type="InterPro" id="IPR025867">
    <property type="entry name" value="MnmE_helical"/>
</dbReference>
<dbReference type="InterPro" id="IPR027417">
    <property type="entry name" value="P-loop_NTPase"/>
</dbReference>
<dbReference type="InterPro" id="IPR005225">
    <property type="entry name" value="Small_GTP-bd"/>
</dbReference>
<dbReference type="InterPro" id="IPR027266">
    <property type="entry name" value="TrmE/GcvT_dom1"/>
</dbReference>
<dbReference type="NCBIfam" id="TIGR00450">
    <property type="entry name" value="mnmE_trmE_thdF"/>
    <property type="match status" value="1"/>
</dbReference>
<dbReference type="NCBIfam" id="NF003661">
    <property type="entry name" value="PRK05291.1-3"/>
    <property type="match status" value="1"/>
</dbReference>
<dbReference type="NCBIfam" id="TIGR00231">
    <property type="entry name" value="small_GTP"/>
    <property type="match status" value="1"/>
</dbReference>
<dbReference type="PANTHER" id="PTHR42714">
    <property type="entry name" value="TRNA MODIFICATION GTPASE GTPBP3"/>
    <property type="match status" value="1"/>
</dbReference>
<dbReference type="PANTHER" id="PTHR42714:SF2">
    <property type="entry name" value="TRNA MODIFICATION GTPASE GTPBP3, MITOCHONDRIAL"/>
    <property type="match status" value="1"/>
</dbReference>
<dbReference type="Pfam" id="PF01926">
    <property type="entry name" value="MMR_HSR1"/>
    <property type="match status" value="1"/>
</dbReference>
<dbReference type="Pfam" id="PF12631">
    <property type="entry name" value="MnmE_helical"/>
    <property type="match status" value="1"/>
</dbReference>
<dbReference type="Pfam" id="PF10396">
    <property type="entry name" value="TrmE_N"/>
    <property type="match status" value="1"/>
</dbReference>
<dbReference type="SUPFAM" id="SSF52540">
    <property type="entry name" value="P-loop containing nucleoside triphosphate hydrolases"/>
    <property type="match status" value="1"/>
</dbReference>
<dbReference type="SUPFAM" id="SSF116878">
    <property type="entry name" value="TrmE connector domain"/>
    <property type="match status" value="1"/>
</dbReference>
<dbReference type="PROSITE" id="PS51709">
    <property type="entry name" value="G_TRME"/>
    <property type="match status" value="1"/>
</dbReference>
<keyword id="KW-0963">Cytoplasm</keyword>
<keyword id="KW-0342">GTP-binding</keyword>
<keyword id="KW-0378">Hydrolase</keyword>
<keyword id="KW-0460">Magnesium</keyword>
<keyword id="KW-0479">Metal-binding</keyword>
<keyword id="KW-0547">Nucleotide-binding</keyword>
<keyword id="KW-0630">Potassium</keyword>
<keyword id="KW-1185">Reference proteome</keyword>
<keyword id="KW-0819">tRNA processing</keyword>
<name>MNME_SHEPA</name>
<sequence>MTTDTIVAQATAPGRGGVGIIRVSGDLATNVAIAVLGHIPKTRYADYCDFKDEAGEVIDQGIALFFKGPNSFTGEDVLELQGHGGQIVLDMLIKRVMEVDGLRIAKPGEFSEQAFMNDKLDLTQAEAIADLIDATSEQAAKSALNSLQGEFSTQIHDLVEKVTNLRLYVEAAIDFPDEEVDFLSDGKIAASLNGIVGKLDGVQASAKQGSIIREGMKVVIAGRPNAGKSSLLNALAGKESAIVTEIAGTTRDVLREHIHLDGMPLHIIDTAGLRDTVDTVEKIGIERAWDEIKTADRVLFMVDGTTTAAIDPHEIWPDFIDRLPSNLGVTVVRNKADLTGEDLSVTQEAGHSVYRISAKTGLGVEDLKQHLKSLMGYQSNLEGGFIARRRHLEALDLASSHLMLGKEQLEVYQAGELLAEELRMCQMALSEITGKFTSDDLLGKIFSSFCIGK</sequence>
<accession>A8HAH9</accession>